<evidence type="ECO:0000255" key="1">
    <source>
        <dbReference type="HAMAP-Rule" id="MF_01719"/>
    </source>
</evidence>
<sequence length="350" mass="39433">MAAFINSKTNIIDLKNITVLFKNQRKEVRAVDNVNLAVERGDIFGIIGYSGAGKSTLVRTINLLQKPTNGSVIVNGIDIKKIDEKNLRVVRHKIGMIFQHFNLMSSRSVLGNIEYPLLDQKINRKKRQQRALELLKLVGLQEYVSAYPSQLSGGQKQRVAIARALANNPEILISDESTSALDPKTTESILELLKDLNKKLNLTIVLITHEMQVIKSICHNVAVMESGKIIEEGKVTDIFIDPSREVTQDFVDTSTNVKNAIKRIIKNTKFKIPGINQELVYLKFVGQSANEGIISKIVKKFRISFNILFANVDQVDGEDIGHMIIAFSGEDSLIKNHWMHLLKMVFEHKY</sequence>
<reference key="1">
    <citation type="journal article" date="2006" name="Proc. Natl. Acad. Sci. U.S.A.">
        <title>Comparative genomics of the lactic acid bacteria.</title>
        <authorList>
            <person name="Makarova K.S."/>
            <person name="Slesarev A."/>
            <person name="Wolf Y.I."/>
            <person name="Sorokin A."/>
            <person name="Mirkin B."/>
            <person name="Koonin E.V."/>
            <person name="Pavlov A."/>
            <person name="Pavlova N."/>
            <person name="Karamychev V."/>
            <person name="Polouchine N."/>
            <person name="Shakhova V."/>
            <person name="Grigoriev I."/>
            <person name="Lou Y."/>
            <person name="Rohksar D."/>
            <person name="Lucas S."/>
            <person name="Huang K."/>
            <person name="Goodstein D.M."/>
            <person name="Hawkins T."/>
            <person name="Plengvidhya V."/>
            <person name="Welker D."/>
            <person name="Hughes J."/>
            <person name="Goh Y."/>
            <person name="Benson A."/>
            <person name="Baldwin K."/>
            <person name="Lee J.-H."/>
            <person name="Diaz-Muniz I."/>
            <person name="Dosti B."/>
            <person name="Smeianov V."/>
            <person name="Wechter W."/>
            <person name="Barabote R."/>
            <person name="Lorca G."/>
            <person name="Altermann E."/>
            <person name="Barrangou R."/>
            <person name="Ganesan B."/>
            <person name="Xie Y."/>
            <person name="Rawsthorne H."/>
            <person name="Tamir D."/>
            <person name="Parker C."/>
            <person name="Breidt F."/>
            <person name="Broadbent J.R."/>
            <person name="Hutkins R."/>
            <person name="O'Sullivan D."/>
            <person name="Steele J."/>
            <person name="Unlu G."/>
            <person name="Saier M.H. Jr."/>
            <person name="Klaenhammer T."/>
            <person name="Richardson P."/>
            <person name="Kozyavkin S."/>
            <person name="Weimer B.C."/>
            <person name="Mills D.A."/>
        </authorList>
    </citation>
    <scope>NUCLEOTIDE SEQUENCE [LARGE SCALE GENOMIC DNA]</scope>
    <source>
        <strain>ATCC BAA-331 / PSU-1</strain>
    </source>
</reference>
<organism>
    <name type="scientific">Oenococcus oeni (strain ATCC BAA-331 / PSU-1)</name>
    <dbReference type="NCBI Taxonomy" id="203123"/>
    <lineage>
        <taxon>Bacteria</taxon>
        <taxon>Bacillati</taxon>
        <taxon>Bacillota</taxon>
        <taxon>Bacilli</taxon>
        <taxon>Lactobacillales</taxon>
        <taxon>Lactobacillaceae</taxon>
        <taxon>Oenococcus</taxon>
    </lineage>
</organism>
<comment type="function">
    <text evidence="1">Part of the ABC transporter complex MetNIQ involved in methionine import. Responsible for energy coupling to the transport system.</text>
</comment>
<comment type="catalytic activity">
    <reaction evidence="1">
        <text>L-methionine(out) + ATP + H2O = L-methionine(in) + ADP + phosphate + H(+)</text>
        <dbReference type="Rhea" id="RHEA:29779"/>
        <dbReference type="ChEBI" id="CHEBI:15377"/>
        <dbReference type="ChEBI" id="CHEBI:15378"/>
        <dbReference type="ChEBI" id="CHEBI:30616"/>
        <dbReference type="ChEBI" id="CHEBI:43474"/>
        <dbReference type="ChEBI" id="CHEBI:57844"/>
        <dbReference type="ChEBI" id="CHEBI:456216"/>
        <dbReference type="EC" id="7.4.2.11"/>
    </reaction>
</comment>
<comment type="catalytic activity">
    <reaction evidence="1">
        <text>D-methionine(out) + ATP + H2O = D-methionine(in) + ADP + phosphate + H(+)</text>
        <dbReference type="Rhea" id="RHEA:29767"/>
        <dbReference type="ChEBI" id="CHEBI:15377"/>
        <dbReference type="ChEBI" id="CHEBI:15378"/>
        <dbReference type="ChEBI" id="CHEBI:30616"/>
        <dbReference type="ChEBI" id="CHEBI:43474"/>
        <dbReference type="ChEBI" id="CHEBI:57932"/>
        <dbReference type="ChEBI" id="CHEBI:456216"/>
        <dbReference type="EC" id="7.4.2.11"/>
    </reaction>
</comment>
<comment type="subunit">
    <text evidence="1">The complex is composed of two ATP-binding proteins (MetN), two transmembrane proteins (MetI) and a solute-binding protein (MetQ).</text>
</comment>
<comment type="subcellular location">
    <subcellularLocation>
        <location evidence="1">Cell membrane</location>
        <topology evidence="1">Peripheral membrane protein</topology>
    </subcellularLocation>
</comment>
<comment type="similarity">
    <text evidence="1">Belongs to the ABC transporter superfamily. Methionine importer (TC 3.A.1.24) family.</text>
</comment>
<accession>Q04F14</accession>
<dbReference type="EC" id="7.4.2.11" evidence="1"/>
<dbReference type="EMBL" id="CP000411">
    <property type="protein sequence ID" value="ABJ56958.1"/>
    <property type="molecule type" value="Genomic_DNA"/>
</dbReference>
<dbReference type="RefSeq" id="WP_002823757.1">
    <property type="nucleotide sequence ID" value="NC_008528.1"/>
</dbReference>
<dbReference type="SMR" id="Q04F14"/>
<dbReference type="STRING" id="203123.OEOE_1056"/>
<dbReference type="KEGG" id="ooe:OEOE_1056"/>
<dbReference type="PATRIC" id="fig|203123.7.peg.1072"/>
<dbReference type="eggNOG" id="COG1135">
    <property type="taxonomic scope" value="Bacteria"/>
</dbReference>
<dbReference type="HOGENOM" id="CLU_000604_1_3_9"/>
<dbReference type="Proteomes" id="UP000000774">
    <property type="component" value="Chromosome"/>
</dbReference>
<dbReference type="GO" id="GO:0005886">
    <property type="term" value="C:plasma membrane"/>
    <property type="evidence" value="ECO:0007669"/>
    <property type="project" value="UniProtKB-SubCell"/>
</dbReference>
<dbReference type="GO" id="GO:0033232">
    <property type="term" value="F:ABC-type D-methionine transporter activity"/>
    <property type="evidence" value="ECO:0007669"/>
    <property type="project" value="UniProtKB-EC"/>
</dbReference>
<dbReference type="GO" id="GO:0005524">
    <property type="term" value="F:ATP binding"/>
    <property type="evidence" value="ECO:0007669"/>
    <property type="project" value="UniProtKB-KW"/>
</dbReference>
<dbReference type="GO" id="GO:0016887">
    <property type="term" value="F:ATP hydrolysis activity"/>
    <property type="evidence" value="ECO:0007669"/>
    <property type="project" value="InterPro"/>
</dbReference>
<dbReference type="CDD" id="cd03258">
    <property type="entry name" value="ABC_MetN_methionine_transporter"/>
    <property type="match status" value="1"/>
</dbReference>
<dbReference type="Gene3D" id="3.30.70.260">
    <property type="match status" value="1"/>
</dbReference>
<dbReference type="Gene3D" id="3.40.50.300">
    <property type="entry name" value="P-loop containing nucleotide triphosphate hydrolases"/>
    <property type="match status" value="1"/>
</dbReference>
<dbReference type="InterPro" id="IPR003593">
    <property type="entry name" value="AAA+_ATPase"/>
</dbReference>
<dbReference type="InterPro" id="IPR003439">
    <property type="entry name" value="ABC_transporter-like_ATP-bd"/>
</dbReference>
<dbReference type="InterPro" id="IPR017871">
    <property type="entry name" value="ABC_transporter-like_CS"/>
</dbReference>
<dbReference type="InterPro" id="IPR045865">
    <property type="entry name" value="ACT-like_dom_sf"/>
</dbReference>
<dbReference type="InterPro" id="IPR041701">
    <property type="entry name" value="MetN_ABC"/>
</dbReference>
<dbReference type="InterPro" id="IPR050086">
    <property type="entry name" value="MetN_ABC_transporter-like"/>
</dbReference>
<dbReference type="InterPro" id="IPR018449">
    <property type="entry name" value="NIL_domain"/>
</dbReference>
<dbReference type="InterPro" id="IPR027417">
    <property type="entry name" value="P-loop_NTPase"/>
</dbReference>
<dbReference type="PANTHER" id="PTHR43166">
    <property type="entry name" value="AMINO ACID IMPORT ATP-BINDING PROTEIN"/>
    <property type="match status" value="1"/>
</dbReference>
<dbReference type="PANTHER" id="PTHR43166:SF30">
    <property type="entry name" value="METHIONINE IMPORT ATP-BINDING PROTEIN METN"/>
    <property type="match status" value="1"/>
</dbReference>
<dbReference type="Pfam" id="PF00005">
    <property type="entry name" value="ABC_tran"/>
    <property type="match status" value="1"/>
</dbReference>
<dbReference type="Pfam" id="PF09383">
    <property type="entry name" value="NIL"/>
    <property type="match status" value="1"/>
</dbReference>
<dbReference type="SMART" id="SM00382">
    <property type="entry name" value="AAA"/>
    <property type="match status" value="1"/>
</dbReference>
<dbReference type="SMART" id="SM00930">
    <property type="entry name" value="NIL"/>
    <property type="match status" value="1"/>
</dbReference>
<dbReference type="SUPFAM" id="SSF55021">
    <property type="entry name" value="ACT-like"/>
    <property type="match status" value="1"/>
</dbReference>
<dbReference type="SUPFAM" id="SSF52540">
    <property type="entry name" value="P-loop containing nucleoside triphosphate hydrolases"/>
    <property type="match status" value="1"/>
</dbReference>
<dbReference type="PROSITE" id="PS00211">
    <property type="entry name" value="ABC_TRANSPORTER_1"/>
    <property type="match status" value="1"/>
</dbReference>
<dbReference type="PROSITE" id="PS50893">
    <property type="entry name" value="ABC_TRANSPORTER_2"/>
    <property type="match status" value="1"/>
</dbReference>
<dbReference type="PROSITE" id="PS51264">
    <property type="entry name" value="METN"/>
    <property type="match status" value="1"/>
</dbReference>
<name>METN1_OENOB</name>
<keyword id="KW-0029">Amino-acid transport</keyword>
<keyword id="KW-0067">ATP-binding</keyword>
<keyword id="KW-1003">Cell membrane</keyword>
<keyword id="KW-0472">Membrane</keyword>
<keyword id="KW-0547">Nucleotide-binding</keyword>
<keyword id="KW-1185">Reference proteome</keyword>
<keyword id="KW-1278">Translocase</keyword>
<keyword id="KW-0813">Transport</keyword>
<proteinExistence type="inferred from homology"/>
<protein>
    <recommendedName>
        <fullName evidence="1">Methionine import ATP-binding protein MetN 1</fullName>
        <ecNumber evidence="1">7.4.2.11</ecNumber>
    </recommendedName>
</protein>
<gene>
    <name evidence="1" type="primary">metN1</name>
    <name type="ordered locus">OEOE_1056</name>
</gene>
<feature type="chain" id="PRO_0000277687" description="Methionine import ATP-binding protein MetN 1">
    <location>
        <begin position="1"/>
        <end position="350"/>
    </location>
</feature>
<feature type="domain" description="ABC transporter" evidence="1">
    <location>
        <begin position="12"/>
        <end position="251"/>
    </location>
</feature>
<feature type="binding site" evidence="1">
    <location>
        <begin position="48"/>
        <end position="55"/>
    </location>
    <ligand>
        <name>ATP</name>
        <dbReference type="ChEBI" id="CHEBI:30616"/>
    </ligand>
</feature>